<proteinExistence type="inferred from homology"/>
<gene>
    <name type="primary">pknB</name>
    <name type="ordered locus">ML0016</name>
</gene>
<sequence length="622" mass="66187">MTTPPHLSDRYELGDILGFGGMSEVHLARDIRLHRDVAVKVLRADLARDPSFYLRFRREAQNAAALNHPSIVAVYDTGEAETSAGPLPYIVMEYVDGATLRDIVHTDGPMPPQQAIEIVADACQALNFSHQNGIIHRDVKPANIMISATNAVKVMDFGIARAIADSTSVTQTAAVIGTAQYLSPEQARGDSVDARSDVYSLGCVLYEILTGEPPFIGDSPVSVAYQHVREDPIPPSQRHEGISVDLDAVVLKALAKNPENRYQTAAEMRADLIRVHSGQPPEAPKVLTDADRSCLLSSGAGNFGVPRTDALSRQSLDETESDGSIGRWVAVVAVLAVLTIAIVAAFNTFGGNTRDVQVPDVRGQVSADAISALQNRGFKTRTLQKPDSTIPPDHVISTEPGANASVGAGDEITINVSTGPEQREVPDVSSLNYTDAVKKLTSSGFKSFKQANSPSTPELLGKVIGTNPSANQTSAITNVITIIVGSGPETKQIPDVTGQIVEIAQKNLNVYGFTKFSQASVDSPRPTGEVIGTNPPKDATVPVDSVIELQVSKGNQFVMPDLSGMFWADAEPRLRALGWTGVLDKGPDVDAGGSQHNRVAYQNPPAGAGVNRDGIITLKFGQ</sequence>
<name>PKNB_MYCLE</name>
<dbReference type="EC" id="2.7.11.1"/>
<dbReference type="EMBL" id="Z70722">
    <property type="protein sequence ID" value="CAA94718.1"/>
    <property type="molecule type" value="Genomic_DNA"/>
</dbReference>
<dbReference type="EMBL" id="AL583917">
    <property type="protein sequence ID" value="CAC29524.1"/>
    <property type="molecule type" value="Genomic_DNA"/>
</dbReference>
<dbReference type="PIR" id="H86910">
    <property type="entry name" value="H86910"/>
</dbReference>
<dbReference type="PIR" id="T10009">
    <property type="entry name" value="T10009"/>
</dbReference>
<dbReference type="RefSeq" id="NP_301142.1">
    <property type="nucleotide sequence ID" value="NC_002677.1"/>
</dbReference>
<dbReference type="RefSeq" id="WP_010907467.1">
    <property type="nucleotide sequence ID" value="NC_002677.1"/>
</dbReference>
<dbReference type="SMR" id="P54744"/>
<dbReference type="STRING" id="272631.gene:17573827"/>
<dbReference type="KEGG" id="mle:ML0016"/>
<dbReference type="PATRIC" id="fig|272631.5.peg.20"/>
<dbReference type="Leproma" id="ML0016"/>
<dbReference type="eggNOG" id="COG0515">
    <property type="taxonomic scope" value="Bacteria"/>
</dbReference>
<dbReference type="eggNOG" id="COG2815">
    <property type="taxonomic scope" value="Bacteria"/>
</dbReference>
<dbReference type="HOGENOM" id="CLU_000288_135_2_11"/>
<dbReference type="OrthoDB" id="9762169at2"/>
<dbReference type="Proteomes" id="UP000000806">
    <property type="component" value="Chromosome"/>
</dbReference>
<dbReference type="GO" id="GO:0005886">
    <property type="term" value="C:plasma membrane"/>
    <property type="evidence" value="ECO:0007669"/>
    <property type="project" value="UniProtKB-SubCell"/>
</dbReference>
<dbReference type="GO" id="GO:0005524">
    <property type="term" value="F:ATP binding"/>
    <property type="evidence" value="ECO:0007669"/>
    <property type="project" value="UniProtKB-KW"/>
</dbReference>
<dbReference type="GO" id="GO:0046872">
    <property type="term" value="F:metal ion binding"/>
    <property type="evidence" value="ECO:0007669"/>
    <property type="project" value="UniProtKB-KW"/>
</dbReference>
<dbReference type="GO" id="GO:0106310">
    <property type="term" value="F:protein serine kinase activity"/>
    <property type="evidence" value="ECO:0007669"/>
    <property type="project" value="RHEA"/>
</dbReference>
<dbReference type="GO" id="GO:0004674">
    <property type="term" value="F:protein serine/threonine kinase activity"/>
    <property type="evidence" value="ECO:0007669"/>
    <property type="project" value="UniProtKB-KW"/>
</dbReference>
<dbReference type="GO" id="GO:0080090">
    <property type="term" value="P:regulation of primary metabolic process"/>
    <property type="evidence" value="ECO:0007669"/>
    <property type="project" value="UniProtKB-ARBA"/>
</dbReference>
<dbReference type="CDD" id="cd06577">
    <property type="entry name" value="PASTA_pknB"/>
    <property type="match status" value="4"/>
</dbReference>
<dbReference type="CDD" id="cd14014">
    <property type="entry name" value="STKc_PknB_like"/>
    <property type="match status" value="1"/>
</dbReference>
<dbReference type="FunFam" id="1.10.510.10:FF:000021">
    <property type="entry name" value="Serine/threonine protein kinase"/>
    <property type="match status" value="1"/>
</dbReference>
<dbReference type="FunFam" id="3.30.200.20:FF:000035">
    <property type="entry name" value="Serine/threonine protein kinase Stk1"/>
    <property type="match status" value="1"/>
</dbReference>
<dbReference type="Gene3D" id="3.30.10.20">
    <property type="match status" value="4"/>
</dbReference>
<dbReference type="Gene3D" id="3.30.200.20">
    <property type="entry name" value="Phosphorylase Kinase, domain 1"/>
    <property type="match status" value="1"/>
</dbReference>
<dbReference type="Gene3D" id="1.10.510.10">
    <property type="entry name" value="Transferase(Phosphotransferase) domain 1"/>
    <property type="match status" value="1"/>
</dbReference>
<dbReference type="InterPro" id="IPR011009">
    <property type="entry name" value="Kinase-like_dom_sf"/>
</dbReference>
<dbReference type="InterPro" id="IPR005543">
    <property type="entry name" value="PASTA_dom"/>
</dbReference>
<dbReference type="InterPro" id="IPR000719">
    <property type="entry name" value="Prot_kinase_dom"/>
</dbReference>
<dbReference type="InterPro" id="IPR017441">
    <property type="entry name" value="Protein_kinase_ATP_BS"/>
</dbReference>
<dbReference type="InterPro" id="IPR008271">
    <property type="entry name" value="Ser/Thr_kinase_AS"/>
</dbReference>
<dbReference type="NCBIfam" id="NF033483">
    <property type="entry name" value="PknB_PASTA_kin"/>
    <property type="match status" value="1"/>
</dbReference>
<dbReference type="PANTHER" id="PTHR43289">
    <property type="entry name" value="MITOGEN-ACTIVATED PROTEIN KINASE KINASE KINASE 20-RELATED"/>
    <property type="match status" value="1"/>
</dbReference>
<dbReference type="PANTHER" id="PTHR43289:SF6">
    <property type="entry name" value="SERINE_THREONINE-PROTEIN KINASE NEKL-3"/>
    <property type="match status" value="1"/>
</dbReference>
<dbReference type="Pfam" id="PF03793">
    <property type="entry name" value="PASTA"/>
    <property type="match status" value="4"/>
</dbReference>
<dbReference type="Pfam" id="PF00069">
    <property type="entry name" value="Pkinase"/>
    <property type="match status" value="1"/>
</dbReference>
<dbReference type="SMART" id="SM00740">
    <property type="entry name" value="PASTA"/>
    <property type="match status" value="4"/>
</dbReference>
<dbReference type="SMART" id="SM00220">
    <property type="entry name" value="S_TKc"/>
    <property type="match status" value="1"/>
</dbReference>
<dbReference type="SUPFAM" id="SSF56112">
    <property type="entry name" value="Protein kinase-like (PK-like)"/>
    <property type="match status" value="1"/>
</dbReference>
<dbReference type="PROSITE" id="PS51178">
    <property type="entry name" value="PASTA"/>
    <property type="match status" value="4"/>
</dbReference>
<dbReference type="PROSITE" id="PS00107">
    <property type="entry name" value="PROTEIN_KINASE_ATP"/>
    <property type="match status" value="1"/>
</dbReference>
<dbReference type="PROSITE" id="PS50011">
    <property type="entry name" value="PROTEIN_KINASE_DOM"/>
    <property type="match status" value="1"/>
</dbReference>
<dbReference type="PROSITE" id="PS00108">
    <property type="entry name" value="PROTEIN_KINASE_ST"/>
    <property type="match status" value="1"/>
</dbReference>
<feature type="chain" id="PRO_0000171207" description="Serine/threonine-protein kinase PknB">
    <location>
        <begin position="1"/>
        <end position="622"/>
    </location>
</feature>
<feature type="topological domain" description="Cytoplasmic" evidence="3">
    <location>
        <begin position="1"/>
        <end position="328"/>
    </location>
</feature>
<feature type="transmembrane region" description="Helical" evidence="3">
    <location>
        <begin position="329"/>
        <end position="349"/>
    </location>
</feature>
<feature type="topological domain" description="Extracellular" evidence="3">
    <location>
        <begin position="350"/>
        <end position="622"/>
    </location>
</feature>
<feature type="domain" description="Protein kinase" evidence="4">
    <location>
        <begin position="11"/>
        <end position="273"/>
    </location>
</feature>
<feature type="domain" description="PASTA 1" evidence="5">
    <location>
        <begin position="352"/>
        <end position="418"/>
    </location>
</feature>
<feature type="domain" description="PASTA 2" evidence="5">
    <location>
        <begin position="419"/>
        <end position="486"/>
    </location>
</feature>
<feature type="domain" description="PASTA 3" evidence="5">
    <location>
        <begin position="487"/>
        <end position="553"/>
    </location>
</feature>
<feature type="domain" description="PASTA 4" evidence="5">
    <location>
        <begin position="554"/>
        <end position="622"/>
    </location>
</feature>
<feature type="region of interest" description="Disordered" evidence="7">
    <location>
        <begin position="381"/>
        <end position="404"/>
    </location>
</feature>
<feature type="active site" description="Proton acceptor" evidence="4 6">
    <location>
        <position position="138"/>
    </location>
</feature>
<feature type="binding site" evidence="4">
    <location>
        <begin position="17"/>
        <end position="25"/>
    </location>
    <ligand>
        <name>ATP</name>
        <dbReference type="ChEBI" id="CHEBI:30616"/>
    </ligand>
</feature>
<feature type="binding site" evidence="4">
    <location>
        <position position="40"/>
    </location>
    <ligand>
        <name>ATP</name>
        <dbReference type="ChEBI" id="CHEBI:30616"/>
    </ligand>
</feature>
<feature type="binding site" evidence="4">
    <location>
        <begin position="93"/>
        <end position="95"/>
    </location>
    <ligand>
        <name>ATP</name>
        <dbReference type="ChEBI" id="CHEBI:30616"/>
    </ligand>
</feature>
<feature type="binding site" evidence="4">
    <location>
        <begin position="140"/>
        <end position="143"/>
    </location>
    <ligand>
        <name>ATP</name>
        <dbReference type="ChEBI" id="CHEBI:30616"/>
    </ligand>
</feature>
<feature type="binding site" evidence="1">
    <location>
        <position position="143"/>
    </location>
    <ligand>
        <name>Mg(2+)</name>
        <dbReference type="ChEBI" id="CHEBI:18420"/>
    </ligand>
</feature>
<feature type="binding site" evidence="4">
    <location>
        <position position="156"/>
    </location>
    <ligand>
        <name>ATP</name>
        <dbReference type="ChEBI" id="CHEBI:30616"/>
    </ligand>
</feature>
<feature type="binding site" evidence="1">
    <location>
        <position position="156"/>
    </location>
    <ligand>
        <name>Mg(2+)</name>
        <dbReference type="ChEBI" id="CHEBI:18420"/>
    </ligand>
</feature>
<feature type="modified residue" description="Phosphoserine; by autocatalysis" evidence="1">
    <location>
        <position position="166"/>
    </location>
</feature>
<feature type="modified residue" description="Phosphoserine; by autocatalysis" evidence="1">
    <location>
        <position position="168"/>
    </location>
</feature>
<feature type="modified residue" description="Phosphothreonine; by autocatalysis" evidence="1">
    <location>
        <position position="170"/>
    </location>
</feature>
<feature type="modified residue" description="Phosphothreonine; by autocatalysis" evidence="1">
    <location>
        <position position="172"/>
    </location>
</feature>
<feature type="modified residue" description="Phosphothreonine; by autocatalysis" evidence="1">
    <location>
        <position position="308"/>
    </location>
</feature>
<feature type="sequence conflict" description="In Ref. 1; CAA94718." evidence="8" ref="1">
    <original>FG</original>
    <variation>LC</variation>
    <location>
        <begin position="303"/>
        <end position="304"/>
    </location>
</feature>
<keyword id="KW-0067">ATP-binding</keyword>
<keyword id="KW-1003">Cell membrane</keyword>
<keyword id="KW-0418">Kinase</keyword>
<keyword id="KW-0460">Magnesium</keyword>
<keyword id="KW-0472">Membrane</keyword>
<keyword id="KW-0479">Metal-binding</keyword>
<keyword id="KW-0547">Nucleotide-binding</keyword>
<keyword id="KW-0597">Phosphoprotein</keyword>
<keyword id="KW-1185">Reference proteome</keyword>
<keyword id="KW-0677">Repeat</keyword>
<keyword id="KW-0723">Serine/threonine-protein kinase</keyword>
<keyword id="KW-0808">Transferase</keyword>
<keyword id="KW-0812">Transmembrane</keyword>
<keyword id="KW-1133">Transmembrane helix</keyword>
<accession>P54744</accession>
<reference key="1">
    <citation type="journal article" date="1996" name="Microbiology">
        <title>Gene arrangement and organization in an approximately 76 kb fragment encompassing the oriC region of the chromosome of Mycobacterium leprae.</title>
        <authorList>
            <person name="Fsihi H."/>
            <person name="de Rossi E."/>
            <person name="Salazar L."/>
            <person name="Cantoni R."/>
            <person name="Labo M."/>
            <person name="Riccardi G."/>
            <person name="Takiff H.E."/>
            <person name="Eiglmeier K."/>
            <person name="Bergh S."/>
            <person name="Cole S.T."/>
        </authorList>
    </citation>
    <scope>NUCLEOTIDE SEQUENCE [GENOMIC DNA]</scope>
</reference>
<reference key="2">
    <citation type="journal article" date="2001" name="Nature">
        <title>Massive gene decay in the leprosy bacillus.</title>
        <authorList>
            <person name="Cole S.T."/>
            <person name="Eiglmeier K."/>
            <person name="Parkhill J."/>
            <person name="James K.D."/>
            <person name="Thomson N.R."/>
            <person name="Wheeler P.R."/>
            <person name="Honore N."/>
            <person name="Garnier T."/>
            <person name="Churcher C.M."/>
            <person name="Harris D.E."/>
            <person name="Mungall K.L."/>
            <person name="Basham D."/>
            <person name="Brown D."/>
            <person name="Chillingworth T."/>
            <person name="Connor R."/>
            <person name="Davies R.M."/>
            <person name="Devlin K."/>
            <person name="Duthoy S."/>
            <person name="Feltwell T."/>
            <person name="Fraser A."/>
            <person name="Hamlin N."/>
            <person name="Holroyd S."/>
            <person name="Hornsby T."/>
            <person name="Jagels K."/>
            <person name="Lacroix C."/>
            <person name="Maclean J."/>
            <person name="Moule S."/>
            <person name="Murphy L.D."/>
            <person name="Oliver K."/>
            <person name="Quail M.A."/>
            <person name="Rajandream M.A."/>
            <person name="Rutherford K.M."/>
            <person name="Rutter S."/>
            <person name="Seeger K."/>
            <person name="Simon S."/>
            <person name="Simmonds M."/>
            <person name="Skelton J."/>
            <person name="Squares R."/>
            <person name="Squares S."/>
            <person name="Stevens K."/>
            <person name="Taylor K."/>
            <person name="Whitehead S."/>
            <person name="Woodward J.R."/>
            <person name="Barrell B.G."/>
        </authorList>
    </citation>
    <scope>NUCLEOTIDE SEQUENCE [LARGE SCALE GENOMIC DNA]</scope>
    <source>
        <strain>TN</strain>
    </source>
</reference>
<organism>
    <name type="scientific">Mycobacterium leprae (strain TN)</name>
    <dbReference type="NCBI Taxonomy" id="272631"/>
    <lineage>
        <taxon>Bacteria</taxon>
        <taxon>Bacillati</taxon>
        <taxon>Actinomycetota</taxon>
        <taxon>Actinomycetes</taxon>
        <taxon>Mycobacteriales</taxon>
        <taxon>Mycobacteriaceae</taxon>
        <taxon>Mycobacterium</taxon>
    </lineage>
</organism>
<evidence type="ECO:0000250" key="1"/>
<evidence type="ECO:0000250" key="2">
    <source>
        <dbReference type="UniProtKB" id="P9WI81"/>
    </source>
</evidence>
<evidence type="ECO:0000255" key="3"/>
<evidence type="ECO:0000255" key="4">
    <source>
        <dbReference type="PROSITE-ProRule" id="PRU00159"/>
    </source>
</evidence>
<evidence type="ECO:0000255" key="5">
    <source>
        <dbReference type="PROSITE-ProRule" id="PRU00528"/>
    </source>
</evidence>
<evidence type="ECO:0000255" key="6">
    <source>
        <dbReference type="PROSITE-ProRule" id="PRU10027"/>
    </source>
</evidence>
<evidence type="ECO:0000256" key="7">
    <source>
        <dbReference type="SAM" id="MobiDB-lite"/>
    </source>
</evidence>
<evidence type="ECO:0000305" key="8"/>
<protein>
    <recommendedName>
        <fullName>Serine/threonine-protein kinase PknB</fullName>
        <ecNumber>2.7.11.1</ecNumber>
    </recommendedName>
</protein>
<comment type="function">
    <text evidence="2">Protein kinase that regulates many aspects of mycobacterial physiology. Is a key component of a signal transduction pathway that regulates cell growth, cell shape and cell division via phosphorylation of target proteins.</text>
</comment>
<comment type="catalytic activity">
    <reaction>
        <text>L-seryl-[protein] + ATP = O-phospho-L-seryl-[protein] + ADP + H(+)</text>
        <dbReference type="Rhea" id="RHEA:17989"/>
        <dbReference type="Rhea" id="RHEA-COMP:9863"/>
        <dbReference type="Rhea" id="RHEA-COMP:11604"/>
        <dbReference type="ChEBI" id="CHEBI:15378"/>
        <dbReference type="ChEBI" id="CHEBI:29999"/>
        <dbReference type="ChEBI" id="CHEBI:30616"/>
        <dbReference type="ChEBI" id="CHEBI:83421"/>
        <dbReference type="ChEBI" id="CHEBI:456216"/>
        <dbReference type="EC" id="2.7.11.1"/>
    </reaction>
</comment>
<comment type="catalytic activity">
    <reaction>
        <text>L-threonyl-[protein] + ATP = O-phospho-L-threonyl-[protein] + ADP + H(+)</text>
        <dbReference type="Rhea" id="RHEA:46608"/>
        <dbReference type="Rhea" id="RHEA-COMP:11060"/>
        <dbReference type="Rhea" id="RHEA-COMP:11605"/>
        <dbReference type="ChEBI" id="CHEBI:15378"/>
        <dbReference type="ChEBI" id="CHEBI:30013"/>
        <dbReference type="ChEBI" id="CHEBI:30616"/>
        <dbReference type="ChEBI" id="CHEBI:61977"/>
        <dbReference type="ChEBI" id="CHEBI:456216"/>
        <dbReference type="EC" id="2.7.11.1"/>
    </reaction>
</comment>
<comment type="subunit">
    <text evidence="1">Homodimer.</text>
</comment>
<comment type="subcellular location">
    <subcellularLocation>
        <location evidence="1">Cell membrane</location>
        <topology evidence="1">Single-pass membrane protein</topology>
    </subcellularLocation>
</comment>
<comment type="PTM">
    <text evidence="1">Autophosphorylated. Dephosphorylated by PstP (By similarity).</text>
</comment>
<comment type="similarity">
    <text evidence="4">Belongs to the protein kinase superfamily. Ser/Thr protein kinase family.</text>
</comment>